<dbReference type="EC" id="7.6.2.7" evidence="1"/>
<dbReference type="EMBL" id="CP000247">
    <property type="protein sequence ID" value="ABG68460.1"/>
    <property type="molecule type" value="Genomic_DNA"/>
</dbReference>
<dbReference type="RefSeq" id="WP_000939359.1">
    <property type="nucleotide sequence ID" value="NC_008253.1"/>
</dbReference>
<dbReference type="SMR" id="Q0TKS1"/>
<dbReference type="KEGG" id="ecp:ECP_0429"/>
<dbReference type="HOGENOM" id="CLU_000604_1_22_6"/>
<dbReference type="Proteomes" id="UP000009182">
    <property type="component" value="Chromosome"/>
</dbReference>
<dbReference type="GO" id="GO:0005886">
    <property type="term" value="C:plasma membrane"/>
    <property type="evidence" value="ECO:0007669"/>
    <property type="project" value="UniProtKB-SubCell"/>
</dbReference>
<dbReference type="GO" id="GO:0015411">
    <property type="term" value="F:ABC-type taurine transporter transporter activity"/>
    <property type="evidence" value="ECO:0007669"/>
    <property type="project" value="UniProtKB-EC"/>
</dbReference>
<dbReference type="GO" id="GO:0005524">
    <property type="term" value="F:ATP binding"/>
    <property type="evidence" value="ECO:0007669"/>
    <property type="project" value="UniProtKB-KW"/>
</dbReference>
<dbReference type="GO" id="GO:0016887">
    <property type="term" value="F:ATP hydrolysis activity"/>
    <property type="evidence" value="ECO:0007669"/>
    <property type="project" value="InterPro"/>
</dbReference>
<dbReference type="CDD" id="cd03293">
    <property type="entry name" value="ABC_NrtD_SsuB_transporters"/>
    <property type="match status" value="1"/>
</dbReference>
<dbReference type="FunFam" id="3.40.50.300:FF:000653">
    <property type="entry name" value="Aliphatic sulfonates import ATP-binding protein SsuB"/>
    <property type="match status" value="1"/>
</dbReference>
<dbReference type="Gene3D" id="3.40.50.300">
    <property type="entry name" value="P-loop containing nucleotide triphosphate hydrolases"/>
    <property type="match status" value="1"/>
</dbReference>
<dbReference type="InterPro" id="IPR003593">
    <property type="entry name" value="AAA+_ATPase"/>
</dbReference>
<dbReference type="InterPro" id="IPR003439">
    <property type="entry name" value="ABC_transporter-like_ATP-bd"/>
</dbReference>
<dbReference type="InterPro" id="IPR017871">
    <property type="entry name" value="ABC_transporter-like_CS"/>
</dbReference>
<dbReference type="InterPro" id="IPR050166">
    <property type="entry name" value="ABC_transporter_ATP-bind"/>
</dbReference>
<dbReference type="InterPro" id="IPR027417">
    <property type="entry name" value="P-loop_NTPase"/>
</dbReference>
<dbReference type="NCBIfam" id="NF008421">
    <property type="entry name" value="PRK11248.1"/>
    <property type="match status" value="1"/>
</dbReference>
<dbReference type="PANTHER" id="PTHR42788:SF18">
    <property type="entry name" value="TAURINE IMPORT ATP-BINDING PROTEIN TAUB"/>
    <property type="match status" value="1"/>
</dbReference>
<dbReference type="PANTHER" id="PTHR42788">
    <property type="entry name" value="TAURINE IMPORT ATP-BINDING PROTEIN-RELATED"/>
    <property type="match status" value="1"/>
</dbReference>
<dbReference type="Pfam" id="PF00005">
    <property type="entry name" value="ABC_tran"/>
    <property type="match status" value="1"/>
</dbReference>
<dbReference type="SMART" id="SM00382">
    <property type="entry name" value="AAA"/>
    <property type="match status" value="1"/>
</dbReference>
<dbReference type="SUPFAM" id="SSF52540">
    <property type="entry name" value="P-loop containing nucleoside triphosphate hydrolases"/>
    <property type="match status" value="1"/>
</dbReference>
<dbReference type="PROSITE" id="PS00211">
    <property type="entry name" value="ABC_TRANSPORTER_1"/>
    <property type="match status" value="1"/>
</dbReference>
<dbReference type="PROSITE" id="PS50893">
    <property type="entry name" value="ABC_TRANSPORTER_2"/>
    <property type="match status" value="1"/>
</dbReference>
<dbReference type="PROSITE" id="PS51250">
    <property type="entry name" value="TAUB"/>
    <property type="match status" value="1"/>
</dbReference>
<gene>
    <name evidence="1" type="primary">tauB</name>
    <name type="ordered locus">ECP_0429</name>
</gene>
<evidence type="ECO:0000255" key="1">
    <source>
        <dbReference type="HAMAP-Rule" id="MF_01714"/>
    </source>
</evidence>
<sequence length="255" mass="28179">MLQISHLYADYGGKPALEDINLTLESGELLVVLGPSGCGKTTLLNLIAGFVPYQHGSIQLAGKGIQGPGAERGVVFQNEGLLPWRNVQDNVAFGLQLAGVEKMQRLEIAHQMVKKVGLEGAEKRYIWQLSGGQRQRVGIARALAANPQLLLLDEPFGALDAFTRDQMQTLLLKLWQETGKQVLLITHDIEEAVFMATELVLLSPGPGRVLERLPLNFARRFVAGESSRSIKSDPQFIAMREYVLSRVFEQREAFS</sequence>
<name>TAUB_ECOL5</name>
<organism>
    <name type="scientific">Escherichia coli O6:K15:H31 (strain 536 / UPEC)</name>
    <dbReference type="NCBI Taxonomy" id="362663"/>
    <lineage>
        <taxon>Bacteria</taxon>
        <taxon>Pseudomonadati</taxon>
        <taxon>Pseudomonadota</taxon>
        <taxon>Gammaproteobacteria</taxon>
        <taxon>Enterobacterales</taxon>
        <taxon>Enterobacteriaceae</taxon>
        <taxon>Escherichia</taxon>
    </lineage>
</organism>
<proteinExistence type="inferred from homology"/>
<accession>Q0TKS1</accession>
<feature type="chain" id="PRO_0000275830" description="Taurine import ATP-binding protein TauB">
    <location>
        <begin position="1"/>
        <end position="255"/>
    </location>
</feature>
<feature type="domain" description="ABC transporter" evidence="1">
    <location>
        <begin position="2"/>
        <end position="229"/>
    </location>
</feature>
<feature type="binding site" evidence="1">
    <location>
        <begin position="34"/>
        <end position="41"/>
    </location>
    <ligand>
        <name>ATP</name>
        <dbReference type="ChEBI" id="CHEBI:30616"/>
    </ligand>
</feature>
<protein>
    <recommendedName>
        <fullName evidence="1">Taurine import ATP-binding protein TauB</fullName>
        <ecNumber evidence="1">7.6.2.7</ecNumber>
    </recommendedName>
</protein>
<comment type="function">
    <text evidence="1">Part of the ABC transporter complex TauABC involved in taurine import. Responsible for energy coupling to the transport system.</text>
</comment>
<comment type="catalytic activity">
    <reaction evidence="1">
        <text>taurine(out) + ATP + H2O = taurine(in) + ADP + phosphate + H(+)</text>
        <dbReference type="Rhea" id="RHEA:14613"/>
        <dbReference type="ChEBI" id="CHEBI:15377"/>
        <dbReference type="ChEBI" id="CHEBI:15378"/>
        <dbReference type="ChEBI" id="CHEBI:30616"/>
        <dbReference type="ChEBI" id="CHEBI:43474"/>
        <dbReference type="ChEBI" id="CHEBI:456216"/>
        <dbReference type="ChEBI" id="CHEBI:507393"/>
        <dbReference type="EC" id="7.6.2.7"/>
    </reaction>
</comment>
<comment type="subunit">
    <text evidence="1">The complex is composed of two ATP-binding proteins (TauB), two transmembrane proteins (TauC) and a solute-binding protein (TauA).</text>
</comment>
<comment type="subcellular location">
    <subcellularLocation>
        <location evidence="1">Cell inner membrane</location>
        <topology evidence="1">Peripheral membrane protein</topology>
    </subcellularLocation>
</comment>
<comment type="similarity">
    <text evidence="1">Belongs to the ABC transporter superfamily. Taurine importer (TC 3.A.1.17.1) family.</text>
</comment>
<reference key="1">
    <citation type="journal article" date="2006" name="Mol. Microbiol.">
        <title>Role of pathogenicity island-associated integrases in the genome plasticity of uropathogenic Escherichia coli strain 536.</title>
        <authorList>
            <person name="Hochhut B."/>
            <person name="Wilde C."/>
            <person name="Balling G."/>
            <person name="Middendorf B."/>
            <person name="Dobrindt U."/>
            <person name="Brzuszkiewicz E."/>
            <person name="Gottschalk G."/>
            <person name="Carniel E."/>
            <person name="Hacker J."/>
        </authorList>
    </citation>
    <scope>NUCLEOTIDE SEQUENCE [LARGE SCALE GENOMIC DNA]</scope>
    <source>
        <strain>536 / UPEC</strain>
    </source>
</reference>
<keyword id="KW-0067">ATP-binding</keyword>
<keyword id="KW-0997">Cell inner membrane</keyword>
<keyword id="KW-1003">Cell membrane</keyword>
<keyword id="KW-0472">Membrane</keyword>
<keyword id="KW-0547">Nucleotide-binding</keyword>
<keyword id="KW-1278">Translocase</keyword>
<keyword id="KW-0813">Transport</keyword>